<protein>
    <recommendedName>
        <fullName evidence="1">Endoribonuclease YbeY</fullName>
        <ecNumber evidence="1">3.1.-.-</ecNumber>
    </recommendedName>
</protein>
<name>YBEY_ALTMD</name>
<accession>B4S0S0</accession>
<accession>F2G6N4</accession>
<gene>
    <name evidence="1" type="primary">ybeY</name>
    <name type="ordered locus">MADE_1007145</name>
</gene>
<comment type="function">
    <text evidence="1">Single strand-specific metallo-endoribonuclease involved in late-stage 70S ribosome quality control and in maturation of the 3' terminus of the 16S rRNA.</text>
</comment>
<comment type="cofactor">
    <cofactor evidence="1">
        <name>Zn(2+)</name>
        <dbReference type="ChEBI" id="CHEBI:29105"/>
    </cofactor>
    <text evidence="1">Binds 1 zinc ion.</text>
</comment>
<comment type="subcellular location">
    <subcellularLocation>
        <location evidence="1">Cytoplasm</location>
    </subcellularLocation>
</comment>
<comment type="similarity">
    <text evidence="1">Belongs to the endoribonuclease YbeY family.</text>
</comment>
<dbReference type="EC" id="3.1.-.-" evidence="1"/>
<dbReference type="EMBL" id="CP001103">
    <property type="protein sequence ID" value="AEA97571.1"/>
    <property type="molecule type" value="Genomic_DNA"/>
</dbReference>
<dbReference type="RefSeq" id="WP_012517913.1">
    <property type="nucleotide sequence ID" value="NC_011138.3"/>
</dbReference>
<dbReference type="SMR" id="B4S0S0"/>
<dbReference type="GeneID" id="56341916"/>
<dbReference type="KEGG" id="amc:MADE_1007145"/>
<dbReference type="HOGENOM" id="CLU_106710_0_1_6"/>
<dbReference type="Proteomes" id="UP000001870">
    <property type="component" value="Chromosome"/>
</dbReference>
<dbReference type="GO" id="GO:0005737">
    <property type="term" value="C:cytoplasm"/>
    <property type="evidence" value="ECO:0007669"/>
    <property type="project" value="UniProtKB-SubCell"/>
</dbReference>
<dbReference type="GO" id="GO:0004222">
    <property type="term" value="F:metalloendopeptidase activity"/>
    <property type="evidence" value="ECO:0007669"/>
    <property type="project" value="InterPro"/>
</dbReference>
<dbReference type="GO" id="GO:0004521">
    <property type="term" value="F:RNA endonuclease activity"/>
    <property type="evidence" value="ECO:0007669"/>
    <property type="project" value="UniProtKB-UniRule"/>
</dbReference>
<dbReference type="GO" id="GO:0008270">
    <property type="term" value="F:zinc ion binding"/>
    <property type="evidence" value="ECO:0007669"/>
    <property type="project" value="UniProtKB-UniRule"/>
</dbReference>
<dbReference type="GO" id="GO:0006364">
    <property type="term" value="P:rRNA processing"/>
    <property type="evidence" value="ECO:0007669"/>
    <property type="project" value="UniProtKB-UniRule"/>
</dbReference>
<dbReference type="Gene3D" id="3.40.390.30">
    <property type="entry name" value="Metalloproteases ('zincins'), catalytic domain"/>
    <property type="match status" value="1"/>
</dbReference>
<dbReference type="HAMAP" id="MF_00009">
    <property type="entry name" value="Endoribonucl_YbeY"/>
    <property type="match status" value="1"/>
</dbReference>
<dbReference type="InterPro" id="IPR023091">
    <property type="entry name" value="MetalPrtase_cat_dom_sf_prd"/>
</dbReference>
<dbReference type="InterPro" id="IPR002036">
    <property type="entry name" value="YbeY"/>
</dbReference>
<dbReference type="InterPro" id="IPR020549">
    <property type="entry name" value="YbeY_CS"/>
</dbReference>
<dbReference type="NCBIfam" id="TIGR00043">
    <property type="entry name" value="rRNA maturation RNase YbeY"/>
    <property type="match status" value="1"/>
</dbReference>
<dbReference type="PANTHER" id="PTHR46986">
    <property type="entry name" value="ENDORIBONUCLEASE YBEY, CHLOROPLASTIC"/>
    <property type="match status" value="1"/>
</dbReference>
<dbReference type="PANTHER" id="PTHR46986:SF1">
    <property type="entry name" value="ENDORIBONUCLEASE YBEY, CHLOROPLASTIC"/>
    <property type="match status" value="1"/>
</dbReference>
<dbReference type="Pfam" id="PF02130">
    <property type="entry name" value="YbeY"/>
    <property type="match status" value="1"/>
</dbReference>
<dbReference type="SUPFAM" id="SSF55486">
    <property type="entry name" value="Metalloproteases ('zincins'), catalytic domain"/>
    <property type="match status" value="1"/>
</dbReference>
<dbReference type="PROSITE" id="PS01306">
    <property type="entry name" value="UPF0054"/>
    <property type="match status" value="1"/>
</dbReference>
<evidence type="ECO:0000255" key="1">
    <source>
        <dbReference type="HAMAP-Rule" id="MF_00009"/>
    </source>
</evidence>
<reference key="1">
    <citation type="journal article" date="2008" name="ISME J.">
        <title>Comparative genomics of two ecotypes of the marine planktonic copiotroph Alteromonas macleodii suggests alternative lifestyles associated with different kinds of particulate organic matter.</title>
        <authorList>
            <person name="Ivars-Martinez E."/>
            <person name="Martin-Cuadrado A.-B."/>
            <person name="D'Auria G."/>
            <person name="Mira A."/>
            <person name="Ferriera S."/>
            <person name="Johnson J."/>
            <person name="Friedman R."/>
            <person name="Rodriguez-Valera F."/>
        </authorList>
    </citation>
    <scope>NUCLEOTIDE SEQUENCE [LARGE SCALE GENOMIC DNA]</scope>
    <source>
        <strain>DSM 17117 / CIP 110805 / LMG 28347 / Deep ecotype</strain>
    </source>
</reference>
<feature type="chain" id="PRO_1000089147" description="Endoribonuclease YbeY">
    <location>
        <begin position="1"/>
        <end position="158"/>
    </location>
</feature>
<feature type="binding site" evidence="1">
    <location>
        <position position="118"/>
    </location>
    <ligand>
        <name>Zn(2+)</name>
        <dbReference type="ChEBI" id="CHEBI:29105"/>
        <note>catalytic</note>
    </ligand>
</feature>
<feature type="binding site" evidence="1">
    <location>
        <position position="122"/>
    </location>
    <ligand>
        <name>Zn(2+)</name>
        <dbReference type="ChEBI" id="CHEBI:29105"/>
        <note>catalytic</note>
    </ligand>
</feature>
<feature type="binding site" evidence="1">
    <location>
        <position position="128"/>
    </location>
    <ligand>
        <name>Zn(2+)</name>
        <dbReference type="ChEBI" id="CHEBI:29105"/>
        <note>catalytic</note>
    </ligand>
</feature>
<organism>
    <name type="scientific">Alteromonas mediterranea (strain DSM 17117 / CIP 110805 / LMG 28347 / Deep ecotype)</name>
    <dbReference type="NCBI Taxonomy" id="1774373"/>
    <lineage>
        <taxon>Bacteria</taxon>
        <taxon>Pseudomonadati</taxon>
        <taxon>Pseudomonadota</taxon>
        <taxon>Gammaproteobacteria</taxon>
        <taxon>Alteromonadales</taxon>
        <taxon>Alteromonadaceae</taxon>
        <taxon>Alteromonas/Salinimonas group</taxon>
        <taxon>Alteromonas</taxon>
    </lineage>
</organism>
<keyword id="KW-0963">Cytoplasm</keyword>
<keyword id="KW-0255">Endonuclease</keyword>
<keyword id="KW-0378">Hydrolase</keyword>
<keyword id="KW-0479">Metal-binding</keyword>
<keyword id="KW-0540">Nuclease</keyword>
<keyword id="KW-0690">Ribosome biogenesis</keyword>
<keyword id="KW-0698">rRNA processing</keyword>
<keyword id="KW-0862">Zinc</keyword>
<sequence length="158" mass="17594">MTAIIDVQQAFEGEEVISIDIPSPAELELWANAVLKYEGLSDQEVTIRFTDEAESQSLNSEYRGKHKPTNVLSFPFEAPPGIEINLLGDLVICAPVISREAEEQDKQVSDHYAHMTVHGLLHLMGYDHIDDAEAEEMEGKEIDILAQLGIDNPYDADE</sequence>
<proteinExistence type="inferred from homology"/>